<sequence length="235" mass="26078">MNGVFDLGGTDGIGPVDPPAEEPVFRADWEKAAFTMFSALFRAGWFGIDEFRHGVEKMDPALYLKSPYYKHWIASFEYHGKRTGKLDLAELDRRTQYYLANPDAPLPEHGPNQELIDFANAVVPSGAPAIRPTDKEPRFKIGDVVRMSSDVPFGHTRIAGYVRGKVGRVISHHGSFVYPDSAGNGRGDDPQHLYTLQFDATELWGEQYAEPNVTTTFDAWDPYLTLVTAPEGAAA</sequence>
<comment type="function">
    <text>NHase catalyzes the hydration of various nitrile compounds to the corresponding amides.</text>
</comment>
<comment type="catalytic activity">
    <reaction>
        <text>an aliphatic primary amide = an aliphatic nitrile + H2O</text>
        <dbReference type="Rhea" id="RHEA:12673"/>
        <dbReference type="ChEBI" id="CHEBI:15377"/>
        <dbReference type="ChEBI" id="CHEBI:65285"/>
        <dbReference type="ChEBI" id="CHEBI:80291"/>
        <dbReference type="EC" id="4.2.1.84"/>
    </reaction>
</comment>
<comment type="subunit">
    <text>Heterodimer of an alpha and a beta chain.</text>
</comment>
<comment type="biotechnology">
    <text>Industrial production of acrylamide is now being developed using some of these enzymes.</text>
</comment>
<comment type="similarity">
    <text evidence="1">Belongs to the nitrile hydratase subunit beta family.</text>
</comment>
<reference key="1">
    <citation type="journal article" date="1991" name="J. Bacteriol.">
        <title>Purification, cloning, and primary structure of a new enantiomer-selective amidase from a Rhodococcus strain: structural evidence for a conserved genetic coupling with nitrile hydratase.</title>
        <authorList>
            <person name="Mayaux J.-F."/>
            <person name="Cerbelaud E."/>
            <person name="Soubrier F."/>
            <person name="Yeh P."/>
            <person name="Blanche F."/>
            <person name="Petre D."/>
        </authorList>
    </citation>
    <scope>NUCLEOTIDE SEQUENCE [GENOMIC DNA]</scope>
</reference>
<organism>
    <name type="scientific">Rhodococcus sp</name>
    <dbReference type="NCBI Taxonomy" id="1831"/>
    <lineage>
        <taxon>Bacteria</taxon>
        <taxon>Bacillati</taxon>
        <taxon>Actinomycetota</taxon>
        <taxon>Actinomycetes</taxon>
        <taxon>Mycobacteriales</taxon>
        <taxon>Nocardiaceae</taxon>
        <taxon>Rhodococcus</taxon>
    </lineage>
</organism>
<gene>
    <name type="primary">nthB</name>
</gene>
<dbReference type="EC" id="4.2.1.84"/>
<dbReference type="EMBL" id="M74531">
    <property type="protein sequence ID" value="AAA26184.1"/>
    <property type="molecule type" value="Genomic_DNA"/>
</dbReference>
<dbReference type="PIR" id="B41326">
    <property type="entry name" value="B41326"/>
</dbReference>
<dbReference type="SMR" id="Q53117"/>
<dbReference type="GO" id="GO:0018822">
    <property type="term" value="F:nitrile hydratase activity"/>
    <property type="evidence" value="ECO:0007669"/>
    <property type="project" value="UniProtKB-EC"/>
</dbReference>
<dbReference type="GO" id="GO:0046914">
    <property type="term" value="F:transition metal ion binding"/>
    <property type="evidence" value="ECO:0007669"/>
    <property type="project" value="InterPro"/>
</dbReference>
<dbReference type="Gene3D" id="2.30.30.50">
    <property type="match status" value="1"/>
</dbReference>
<dbReference type="Gene3D" id="1.10.472.20">
    <property type="entry name" value="Nitrile hydratase, beta subunit"/>
    <property type="match status" value="1"/>
</dbReference>
<dbReference type="InterPro" id="IPR049054">
    <property type="entry name" value="CN_hydtase_beta-like_N"/>
</dbReference>
<dbReference type="InterPro" id="IPR042262">
    <property type="entry name" value="CN_hydtase_beta_C"/>
</dbReference>
<dbReference type="InterPro" id="IPR024690">
    <property type="entry name" value="CN_hydtase_beta_dom_C"/>
</dbReference>
<dbReference type="InterPro" id="IPR008990">
    <property type="entry name" value="Elect_transpt_acc-like_dom_sf"/>
</dbReference>
<dbReference type="InterPro" id="IPR003168">
    <property type="entry name" value="Nitrile_hydratase_bsu"/>
</dbReference>
<dbReference type="NCBIfam" id="TIGR03888">
    <property type="entry name" value="nitrile_beta"/>
    <property type="match status" value="1"/>
</dbReference>
<dbReference type="Pfam" id="PF02211">
    <property type="entry name" value="NHase_beta_C"/>
    <property type="match status" value="1"/>
</dbReference>
<dbReference type="Pfam" id="PF21006">
    <property type="entry name" value="NHase_beta_N"/>
    <property type="match status" value="1"/>
</dbReference>
<dbReference type="PIRSF" id="PIRSF001427">
    <property type="entry name" value="NHase_beta"/>
    <property type="match status" value="1"/>
</dbReference>
<dbReference type="SUPFAM" id="SSF50090">
    <property type="entry name" value="Electron transport accessory proteins"/>
    <property type="match status" value="1"/>
</dbReference>
<evidence type="ECO:0000305" key="1"/>
<protein>
    <recommendedName>
        <fullName>Nitrile hydratase subunit beta</fullName>
        <shortName>NHase</shortName>
        <shortName>Nitrilase</shortName>
        <ecNumber>4.2.1.84</ecNumber>
    </recommendedName>
</protein>
<feature type="chain" id="PRO_0000186834" description="Nitrile hydratase subunit beta">
    <location>
        <begin position="1"/>
        <end position="235"/>
    </location>
</feature>
<accession>Q53117</accession>
<keyword id="KW-0456">Lyase</keyword>
<name>NHAB_RHOSO</name>
<proteinExistence type="evidence at protein level"/>